<gene>
    <name evidence="2" type="primary">PA</name>
</gene>
<organism>
    <name type="scientific">Influenza A virus (strain A/Northern Territory/60/1968 H3N2)</name>
    <name type="common">Influenza A virus (strain NT60)</name>
    <name type="synonym">Influenza A virus (strain A/NT/60/1968 H3N2)</name>
    <dbReference type="NCBI Taxonomy" id="384505"/>
    <lineage>
        <taxon>Viruses</taxon>
        <taxon>Riboviria</taxon>
        <taxon>Orthornavirae</taxon>
        <taxon>Negarnaviricota</taxon>
        <taxon>Polyploviricotina</taxon>
        <taxon>Insthoviricetes</taxon>
        <taxon>Articulavirales</taxon>
        <taxon>Orthomyxoviridae</taxon>
        <taxon>Alphainfluenzavirus</taxon>
        <taxon>Alphainfluenzavirus influenzae</taxon>
        <taxon>Influenza A virus</taxon>
    </lineage>
</organism>
<organismHost>
    <name type="scientific">Aves</name>
    <dbReference type="NCBI Taxonomy" id="8782"/>
</organismHost>
<organismHost>
    <name type="scientific">Cetacea</name>
    <name type="common">whales</name>
    <dbReference type="NCBI Taxonomy" id="9721"/>
</organismHost>
<organismHost>
    <name type="scientific">Homo sapiens</name>
    <name type="common">Human</name>
    <dbReference type="NCBI Taxonomy" id="9606"/>
</organismHost>
<organismHost>
    <name type="scientific">Phocidae</name>
    <name type="common">true seals</name>
    <dbReference type="NCBI Taxonomy" id="9709"/>
</organismHost>
<organismHost>
    <name type="scientific">Sus scrofa</name>
    <name type="common">Pig</name>
    <dbReference type="NCBI Taxonomy" id="9823"/>
</organismHost>
<dbReference type="EC" id="3.1.-.-" evidence="2"/>
<dbReference type="EMBL" id="J02139">
    <property type="protein sequence ID" value="AAA43597.1"/>
    <property type="molecule type" value="Genomic_RNA"/>
</dbReference>
<dbReference type="PIR" id="A04049">
    <property type="entry name" value="P2IV68"/>
</dbReference>
<dbReference type="PDB" id="6QPG">
    <property type="method" value="X-ray"/>
    <property type="resolution" value="3.34 A"/>
    <property type="chains" value="A/D/G/J=1-716"/>
</dbReference>
<dbReference type="PDB" id="6QX3">
    <property type="method" value="EM"/>
    <property type="resolution" value="3.79 A"/>
    <property type="chains" value="A=1-716"/>
</dbReference>
<dbReference type="PDB" id="6QX8">
    <property type="method" value="EM"/>
    <property type="resolution" value="4.07 A"/>
    <property type="chains" value="A/E=1-716"/>
</dbReference>
<dbReference type="PDB" id="6QXE">
    <property type="method" value="EM"/>
    <property type="resolution" value="4.15 A"/>
    <property type="chains" value="A/E=1-716"/>
</dbReference>
<dbReference type="PDB" id="6RR7">
    <property type="method" value="EM"/>
    <property type="resolution" value="3.01 A"/>
    <property type="chains" value="A=1-716"/>
</dbReference>
<dbReference type="PDB" id="8Y7M">
    <property type="method" value="EM"/>
    <property type="resolution" value="3.00 A"/>
    <property type="chains" value="A/E=1-716"/>
</dbReference>
<dbReference type="PDB" id="8Y7O">
    <property type="method" value="EM"/>
    <property type="resolution" value="3.00 A"/>
    <property type="chains" value="A/E/I/L/M/Q=1-716"/>
</dbReference>
<dbReference type="PDBsum" id="6QPG"/>
<dbReference type="PDBsum" id="6QX3"/>
<dbReference type="PDBsum" id="6QX8"/>
<dbReference type="PDBsum" id="6QXE"/>
<dbReference type="PDBsum" id="6RR7"/>
<dbReference type="PDBsum" id="8Y7M"/>
<dbReference type="PDBsum" id="8Y7O"/>
<dbReference type="EMDB" id="EMD-39020"/>
<dbReference type="EMDB" id="EMD-39022"/>
<dbReference type="EMDB" id="EMD-4661"/>
<dbReference type="EMDB" id="EMD-4663"/>
<dbReference type="EMDB" id="EMD-4666"/>
<dbReference type="EMDB" id="EMD-4986"/>
<dbReference type="SMR" id="P03434"/>
<dbReference type="IntAct" id="P03434">
    <property type="interactions" value="3"/>
</dbReference>
<dbReference type="MEROPS" id="S62.001"/>
<dbReference type="ABCD" id="P03434">
    <property type="antibodies" value="1 sequenced antibody"/>
</dbReference>
<dbReference type="GO" id="GO:0030430">
    <property type="term" value="C:host cell cytoplasm"/>
    <property type="evidence" value="ECO:0007669"/>
    <property type="project" value="UniProtKB-SubCell"/>
</dbReference>
<dbReference type="GO" id="GO:0042025">
    <property type="term" value="C:host cell nucleus"/>
    <property type="evidence" value="ECO:0007669"/>
    <property type="project" value="UniProtKB-SubCell"/>
</dbReference>
<dbReference type="GO" id="GO:0004519">
    <property type="term" value="F:endonuclease activity"/>
    <property type="evidence" value="ECO:0007669"/>
    <property type="project" value="UniProtKB-KW"/>
</dbReference>
<dbReference type="GO" id="GO:0046872">
    <property type="term" value="F:metal ion binding"/>
    <property type="evidence" value="ECO:0007669"/>
    <property type="project" value="UniProtKB-KW"/>
</dbReference>
<dbReference type="GO" id="GO:0003723">
    <property type="term" value="F:RNA binding"/>
    <property type="evidence" value="ECO:0007669"/>
    <property type="project" value="UniProtKB-UniRule"/>
</dbReference>
<dbReference type="GO" id="GO:0075526">
    <property type="term" value="P:cap snatching"/>
    <property type="evidence" value="ECO:0007669"/>
    <property type="project" value="UniProtKB-UniRule"/>
</dbReference>
<dbReference type="GO" id="GO:0006351">
    <property type="term" value="P:DNA-templated transcription"/>
    <property type="evidence" value="ECO:0007669"/>
    <property type="project" value="UniProtKB-UniRule"/>
</dbReference>
<dbReference type="GO" id="GO:0039657">
    <property type="term" value="P:symbiont-mediated suppression of host gene expression"/>
    <property type="evidence" value="ECO:0007669"/>
    <property type="project" value="UniProtKB-KW"/>
</dbReference>
<dbReference type="GO" id="GO:0039523">
    <property type="term" value="P:symbiont-mediated suppression of host mRNA transcription via inhibition of RNA polymerase II activity"/>
    <property type="evidence" value="ECO:0007669"/>
    <property type="project" value="UniProtKB-UniRule"/>
</dbReference>
<dbReference type="GO" id="GO:0039694">
    <property type="term" value="P:viral RNA genome replication"/>
    <property type="evidence" value="ECO:0007669"/>
    <property type="project" value="InterPro"/>
</dbReference>
<dbReference type="GO" id="GO:0075523">
    <property type="term" value="P:viral translational frameshifting"/>
    <property type="evidence" value="ECO:0007669"/>
    <property type="project" value="UniProtKB-KW"/>
</dbReference>
<dbReference type="FunFam" id="3.40.91.90:FF:000001">
    <property type="entry name" value="Polymerase acidic protein"/>
    <property type="match status" value="1"/>
</dbReference>
<dbReference type="Gene3D" id="3.40.91.90">
    <property type="entry name" value="Influenza RNA-dependent RNA polymerase subunit PA, endonuclease domain"/>
    <property type="match status" value="1"/>
</dbReference>
<dbReference type="HAMAP" id="MF_04063">
    <property type="entry name" value="INFV_PA"/>
    <property type="match status" value="1"/>
</dbReference>
<dbReference type="InterPro" id="IPR037534">
    <property type="entry name" value="INFV_PA"/>
</dbReference>
<dbReference type="InterPro" id="IPR001009">
    <property type="entry name" value="PA/PA-X"/>
</dbReference>
<dbReference type="InterPro" id="IPR038372">
    <property type="entry name" value="PA/PA-X_sf"/>
</dbReference>
<dbReference type="Pfam" id="PF00603">
    <property type="entry name" value="Flu_PA"/>
    <property type="match status" value="1"/>
</dbReference>
<keyword id="KW-0002">3D-structure</keyword>
<keyword id="KW-1157">Cap snatching</keyword>
<keyword id="KW-0255">Endonuclease</keyword>
<keyword id="KW-1262">Eukaryotic host gene expression shutoff by virus</keyword>
<keyword id="KW-1191">Eukaryotic host transcription shutoff by virus</keyword>
<keyword id="KW-1035">Host cytoplasm</keyword>
<keyword id="KW-1190">Host gene expression shutoff by virus</keyword>
<keyword id="KW-1048">Host nucleus</keyword>
<keyword id="KW-0945">Host-virus interaction</keyword>
<keyword id="KW-0378">Hydrolase</keyword>
<keyword id="KW-1104">Inhibition of host RNA polymerase II by virus</keyword>
<keyword id="KW-0464">Manganese</keyword>
<keyword id="KW-0479">Metal-binding</keyword>
<keyword id="KW-0540">Nuclease</keyword>
<keyword id="KW-0597">Phosphoprotein</keyword>
<keyword id="KW-0688">Ribosomal frameshifting</keyword>
<proteinExistence type="evidence at protein level"/>
<protein>
    <recommendedName>
        <fullName evidence="2">Polymerase acidic protein</fullName>
        <ecNumber evidence="2">3.1.-.-</ecNumber>
    </recommendedName>
    <alternativeName>
        <fullName evidence="2">RNA-directed RNA polymerase subunit P2</fullName>
    </alternativeName>
</protein>
<name>PA_I68A6</name>
<accession>P03434</accession>
<evidence type="ECO:0000250" key="1">
    <source>
        <dbReference type="UniProtKB" id="P03433"/>
    </source>
</evidence>
<evidence type="ECO:0000255" key="2">
    <source>
        <dbReference type="HAMAP-Rule" id="MF_04063"/>
    </source>
</evidence>
<evidence type="ECO:0007829" key="3">
    <source>
        <dbReference type="PDB" id="6QPG"/>
    </source>
</evidence>
<evidence type="ECO:0007829" key="4">
    <source>
        <dbReference type="PDB" id="6RR7"/>
    </source>
</evidence>
<evidence type="ECO:0007829" key="5">
    <source>
        <dbReference type="PDB" id="8Y7M"/>
    </source>
</evidence>
<evidence type="ECO:0007829" key="6">
    <source>
        <dbReference type="PDB" id="8Y7O"/>
    </source>
</evidence>
<sequence>MEDFVRQCFNPMIVELAEKAMKEYGEDLKIETNKFAAICTHLEVCFMYSDFHFINEQGESIVVELDDPNALLKHRFEIIEGRDRTMAWTVVNSICNTTGAEKPKFLPDLYDYKENRFIEIGVTRREVHIYYLEKANKIKSENTHIHIFSFTGEEMATKADYTLDEESRARIKTRLFTIRQEMANRGLWDSFRQSERGEETIEERFEITGTMRRLADQSLPPNFSCLENFRAYVDGFEPNGYIEGKLSQMSKEVNAKIEPFLKTTPRPIRLPDGPPCFQRSKFLLMDALKLSIEDPSHEGEGIPLYDAIKCMRTFFGWKEPYIVKPHEKGINPNYLLSWKQVLAELQDIENEEKIPRTKNMKKTSQLKWALGENMAPEKVDFDNCRDVSDLKQYDSDEPELRSLSSWIQNEFNKACELTDSTWIELDEIGEDVAPIEYIASMRRNYFTAEVSHCRATEYIMKGVYINTALLNASCAAMDDFQLIPMISKCRTKEGRRKTNLYGFIIKGRSHLRNDTDVVNFVSMEFSLTDPRLEPHKWEKYCVLEIGDMLLRSAIGQMSRPMFLYVRTNGTSKIKMKWGMEMRRCLLQSLQQIESMIEAESSVKEKDMTKEFFENKSETWPIGESPKGVEDGSIGKVCRTLLAKSVFNSLYASPQLEGFSAESRKLLLVVQALRDNLEPGTFDLEGLYEAIEECLINDPWVLLNASWFNSFLTHALR</sequence>
<comment type="function">
    <text evidence="2">Plays an essential role in viral RNA transcription and replication by forming the heterotrimeric polymerase complex together with PB1 and PB2 subunits. The complex transcribes viral mRNAs by using a unique mechanism called cap-snatching. It consists in the hijacking and cleavage of host capped pre-mRNAs. These short capped RNAs are then used as primers for viral mRNAs. The PB2 subunit is responsible for the binding of the 5' cap of cellular pre-mRNAs which are subsequently cleaved after 10-13 nucleotides by the PA subunit that carries the endonuclease activity.</text>
</comment>
<comment type="cofactor">
    <cofactor evidence="2">
        <name>Mn(2+)</name>
        <dbReference type="ChEBI" id="CHEBI:29035"/>
    </cofactor>
    <text evidence="2">Binds 2 manganese ions per subunit.</text>
</comment>
<comment type="subunit">
    <text evidence="1 2">Influenza RNA polymerase is composed of three subunits: PB1, PB2 and PA. Interacts (via C-terminus) with PB1 (via N-terminus).</text>
</comment>
<comment type="subcellular location">
    <subcellularLocation>
        <location evidence="2">Host cytoplasm</location>
    </subcellularLocation>
    <subcellularLocation>
        <location evidence="2">Host nucleus</location>
    </subcellularLocation>
    <text evidence="1 2">PB1 and PA are transported in the host nucleus as a complex.</text>
</comment>
<comment type="alternative products">
    <event type="ribosomal frameshifting"/>
    <isoform>
        <id>P03434-1</id>
        <name>PA</name>
        <sequence type="displayed"/>
    </isoform>
    <isoform>
        <id>P0DJT7-1</id>
        <name>PA-X</name>
        <sequence type="external"/>
    </isoform>
</comment>
<comment type="PTM">
    <text evidence="1 2">Phosphorylated on serines and threonines by host kinases, including human casein kinase II.</text>
</comment>
<comment type="similarity">
    <text evidence="2">Belongs to the influenza viruses PA family.</text>
</comment>
<reference key="1">
    <citation type="journal article" date="1982" name="Virology">
        <title>Influenza A virus evolution: complete sequences of influenza A/NT/60/68 RNA segment 3 and its predicted acidic P polypeptide compared with those of influenza A/PR/8/34.</title>
        <authorList>
            <person name="Bishop D.H.L."/>
            <person name="Jones K.L."/>
            <person name="Huddleston J.A."/>
            <person name="Brownlee G.G."/>
        </authorList>
    </citation>
    <scope>NUCLEOTIDE SEQUENCE [GENOMIC RNA]</scope>
</reference>
<feature type="chain" id="PRO_0000078794" description="Polymerase acidic protein">
    <location>
        <begin position="1"/>
        <end position="716"/>
    </location>
</feature>
<feature type="short sequence motif" description="Nuclear localization signal 1 (NLS1)" evidence="1 2">
    <location>
        <begin position="124"/>
        <end position="139"/>
    </location>
</feature>
<feature type="short sequence motif" description="Nuclear localization signal 2 (NLS2)" evidence="1 2">
    <location>
        <begin position="184"/>
        <end position="247"/>
    </location>
</feature>
<feature type="binding site" evidence="2">
    <location>
        <position position="41"/>
    </location>
    <ligand>
        <name>Mn(2+)</name>
        <dbReference type="ChEBI" id="CHEBI:29035"/>
        <label>1</label>
    </ligand>
</feature>
<feature type="binding site" evidence="2">
    <location>
        <position position="80"/>
    </location>
    <ligand>
        <name>Mn(2+)</name>
        <dbReference type="ChEBI" id="CHEBI:29035"/>
        <label>2</label>
    </ligand>
</feature>
<feature type="binding site" evidence="2">
    <location>
        <position position="108"/>
    </location>
    <ligand>
        <name>Mn(2+)</name>
        <dbReference type="ChEBI" id="CHEBI:29035"/>
        <label>1</label>
    </ligand>
</feature>
<feature type="binding site" evidence="2">
    <location>
        <position position="108"/>
    </location>
    <ligand>
        <name>Mn(2+)</name>
        <dbReference type="ChEBI" id="CHEBI:29035"/>
        <label>2</label>
    </ligand>
</feature>
<feature type="binding site" evidence="2">
    <location>
        <position position="119"/>
    </location>
    <ligand>
        <name>Mn(2+)</name>
        <dbReference type="ChEBI" id="CHEBI:29035"/>
        <label>1</label>
    </ligand>
</feature>
<feature type="binding site" evidence="2">
    <location>
        <position position="120"/>
    </location>
    <ligand>
        <name>Mn(2+)</name>
        <dbReference type="ChEBI" id="CHEBI:29035"/>
        <label>1</label>
    </ligand>
</feature>
<feature type="helix" evidence="5">
    <location>
        <begin position="2"/>
        <end position="8"/>
    </location>
</feature>
<feature type="helix" evidence="5">
    <location>
        <begin position="11"/>
        <end position="24"/>
    </location>
</feature>
<feature type="turn" evidence="5">
    <location>
        <begin position="28"/>
        <end position="30"/>
    </location>
</feature>
<feature type="helix" evidence="5">
    <location>
        <begin position="33"/>
        <end position="48"/>
    </location>
</feature>
<feature type="strand" evidence="4">
    <location>
        <begin position="56"/>
        <end position="59"/>
    </location>
</feature>
<feature type="strand" evidence="4">
    <location>
        <begin position="68"/>
        <end position="70"/>
    </location>
</feature>
<feature type="strand" evidence="6">
    <location>
        <begin position="76"/>
        <end position="78"/>
    </location>
</feature>
<feature type="strand" evidence="4">
    <location>
        <begin position="80"/>
        <end position="82"/>
    </location>
</feature>
<feature type="helix" evidence="5">
    <location>
        <begin position="84"/>
        <end position="98"/>
    </location>
</feature>
<feature type="strand" evidence="5">
    <location>
        <begin position="108"/>
        <end position="111"/>
    </location>
</feature>
<feature type="turn" evidence="5">
    <location>
        <begin position="112"/>
        <end position="115"/>
    </location>
</feature>
<feature type="strand" evidence="5">
    <location>
        <begin position="116"/>
        <end position="125"/>
    </location>
</feature>
<feature type="helix" evidence="5">
    <location>
        <begin position="127"/>
        <end position="137"/>
    </location>
</feature>
<feature type="strand" evidence="5">
    <location>
        <begin position="143"/>
        <end position="149"/>
    </location>
</feature>
<feature type="strand" evidence="5">
    <location>
        <begin position="154"/>
        <end position="156"/>
    </location>
</feature>
<feature type="helix" evidence="5">
    <location>
        <begin position="157"/>
        <end position="159"/>
    </location>
</feature>
<feature type="helix" evidence="5">
    <location>
        <begin position="165"/>
        <end position="183"/>
    </location>
</feature>
<feature type="turn" evidence="5">
    <location>
        <begin position="184"/>
        <end position="186"/>
    </location>
</feature>
<feature type="helix" evidence="5">
    <location>
        <begin position="188"/>
        <end position="192"/>
    </location>
</feature>
<feature type="strand" evidence="5">
    <location>
        <begin position="197"/>
        <end position="200"/>
    </location>
</feature>
<feature type="helix" evidence="5">
    <location>
        <begin position="210"/>
        <end position="216"/>
    </location>
</feature>
<feature type="helix" evidence="5">
    <location>
        <begin position="226"/>
        <end position="234"/>
    </location>
</feature>
<feature type="helix" evidence="5">
    <location>
        <begin position="242"/>
        <end position="248"/>
    </location>
</feature>
<feature type="strand" evidence="5">
    <location>
        <begin position="273"/>
        <end position="275"/>
    </location>
</feature>
<feature type="strand" evidence="5">
    <location>
        <begin position="284"/>
        <end position="286"/>
    </location>
</feature>
<feature type="helix" evidence="5">
    <location>
        <begin position="303"/>
        <end position="311"/>
    </location>
</feature>
<feature type="strand" evidence="5">
    <location>
        <begin position="317"/>
        <end position="324"/>
    </location>
</feature>
<feature type="strand" evidence="5">
    <location>
        <begin position="327"/>
        <end position="329"/>
    </location>
</feature>
<feature type="helix" evidence="5">
    <location>
        <begin position="331"/>
        <end position="346"/>
    </location>
</feature>
<feature type="strand" evidence="3">
    <location>
        <begin position="351"/>
        <end position="354"/>
    </location>
</feature>
<feature type="helix" evidence="5">
    <location>
        <begin position="364"/>
        <end position="370"/>
    </location>
</feature>
<feature type="helix" evidence="4">
    <location>
        <begin position="381"/>
        <end position="383"/>
    </location>
</feature>
<feature type="helix" evidence="5">
    <location>
        <begin position="384"/>
        <end position="386"/>
    </location>
</feature>
<feature type="helix" evidence="5">
    <location>
        <begin position="406"/>
        <end position="414"/>
    </location>
</feature>
<feature type="strand" evidence="4">
    <location>
        <begin position="419"/>
        <end position="421"/>
    </location>
</feature>
<feature type="helix" evidence="5">
    <location>
        <begin position="434"/>
        <end position="450"/>
    </location>
</feature>
<feature type="helix" evidence="5">
    <location>
        <begin position="454"/>
        <end position="475"/>
    </location>
</feature>
<feature type="strand" evidence="4">
    <location>
        <begin position="477"/>
        <end position="479"/>
    </location>
</feature>
<feature type="strand" evidence="5">
    <location>
        <begin position="481"/>
        <end position="490"/>
    </location>
</feature>
<feature type="strand" evidence="5">
    <location>
        <begin position="492"/>
        <end position="494"/>
    </location>
</feature>
<feature type="strand" evidence="5">
    <location>
        <begin position="496"/>
        <end position="506"/>
    </location>
</feature>
<feature type="strand" evidence="5">
    <location>
        <begin position="513"/>
        <end position="515"/>
    </location>
</feature>
<feature type="strand" evidence="5">
    <location>
        <begin position="519"/>
        <end position="526"/>
    </location>
</feature>
<feature type="turn" evidence="3">
    <location>
        <begin position="530"/>
        <end position="532"/>
    </location>
</feature>
<feature type="helix" evidence="5">
    <location>
        <begin position="534"/>
        <end position="536"/>
    </location>
</feature>
<feature type="strand" evidence="5">
    <location>
        <begin position="541"/>
        <end position="548"/>
    </location>
</feature>
<feature type="strand" evidence="5">
    <location>
        <begin position="553"/>
        <end position="556"/>
    </location>
</feature>
<feature type="strand" evidence="5">
    <location>
        <begin position="559"/>
        <end position="569"/>
    </location>
</feature>
<feature type="helix" evidence="5">
    <location>
        <begin position="573"/>
        <end position="578"/>
    </location>
</feature>
<feature type="turn" evidence="4">
    <location>
        <begin position="579"/>
        <end position="582"/>
    </location>
</feature>
<feature type="helix" evidence="5">
    <location>
        <begin position="583"/>
        <end position="602"/>
    </location>
</feature>
<feature type="helix" evidence="5">
    <location>
        <begin position="609"/>
        <end position="612"/>
    </location>
</feature>
<feature type="strand" evidence="5">
    <location>
        <begin position="619"/>
        <end position="623"/>
    </location>
</feature>
<feature type="strand" evidence="5">
    <location>
        <begin position="625"/>
        <end position="631"/>
    </location>
</feature>
<feature type="helix" evidence="5">
    <location>
        <begin position="633"/>
        <end position="649"/>
    </location>
</feature>
<feature type="helix" evidence="5">
    <location>
        <begin position="653"/>
        <end position="673"/>
    </location>
</feature>
<feature type="strand" evidence="5">
    <location>
        <begin position="679"/>
        <end position="681"/>
    </location>
</feature>
<feature type="helix" evidence="5">
    <location>
        <begin position="683"/>
        <end position="692"/>
    </location>
</feature>
<feature type="helix" evidence="5">
    <location>
        <begin position="698"/>
        <end position="713"/>
    </location>
</feature>